<name>PYRG_NOCFA</name>
<sequence>MGQTRIQARTATKHIFVSGGVASSLGKGLTASSLGQLLTARGLRVTMQKLDPYLNVDPGTMNPFQHGEVFVTEDGAETDLDVGHYERFLDRDLSRDANVTTGQIYSSVIAKERRGEYLGDTVQVIPHITDEIKNRILAMRGPDLQGQTPDVVITEIGGTVGDIESQPFLEAARQIRHDVGRDNVFFLHVSLVPYLAPSGELKTKPTQHSVAALRNIGIQPDALILRCDREVPQALKSKIALMCDVEVDACISTPDAPSIYDIPKVLHREGLDAYVVRRLGLPFRDVDWTVWGDLLDRVHSPREEVEVALVGKYVDLPDAYLSVTEALRAGGFASRAKVNIRWVASDECETAAGAAAALRDVDAILIPGGFGIRGIEGKVGAIHFARTRGIPLLGLCLGLQCVVIEAARSIGLTDANSTEFEPDTQHPVISTMADQKQAVAGEADLGGTMRLGAYPAVLEKGSVVARAYGSEQVSERHRHRYEVNNAYRDKIATSGLKFSGTSPDGLLVEFVELPAEVHPFFVATQAHPELKSRPTRPHPLFAALIAAALKYKLAERLPVDIPDDELASAEQGA</sequence>
<gene>
    <name evidence="1" type="primary">pyrG</name>
    <name type="ordered locus">NFA_20050</name>
</gene>
<feature type="chain" id="PRO_0000266166" description="CTP synthase">
    <location>
        <begin position="1"/>
        <end position="573"/>
    </location>
</feature>
<feature type="domain" description="Glutamine amidotransferase type-1" evidence="1">
    <location>
        <begin position="306"/>
        <end position="554"/>
    </location>
</feature>
<feature type="region of interest" description="Amidoligase domain" evidence="1">
    <location>
        <begin position="1"/>
        <end position="281"/>
    </location>
</feature>
<feature type="active site" description="Nucleophile; for glutamine hydrolysis" evidence="1">
    <location>
        <position position="396"/>
    </location>
</feature>
<feature type="active site" evidence="1">
    <location>
        <position position="527"/>
    </location>
</feature>
<feature type="active site" evidence="1">
    <location>
        <position position="529"/>
    </location>
</feature>
<feature type="binding site" evidence="1">
    <location>
        <position position="23"/>
    </location>
    <ligand>
        <name>CTP</name>
        <dbReference type="ChEBI" id="CHEBI:37563"/>
        <note>allosteric inhibitor</note>
    </ligand>
</feature>
<feature type="binding site" evidence="1">
    <location>
        <position position="23"/>
    </location>
    <ligand>
        <name>UTP</name>
        <dbReference type="ChEBI" id="CHEBI:46398"/>
    </ligand>
</feature>
<feature type="binding site" evidence="1">
    <location>
        <begin position="24"/>
        <end position="29"/>
    </location>
    <ligand>
        <name>ATP</name>
        <dbReference type="ChEBI" id="CHEBI:30616"/>
    </ligand>
</feature>
<feature type="binding site" evidence="1">
    <location>
        <position position="81"/>
    </location>
    <ligand>
        <name>ATP</name>
        <dbReference type="ChEBI" id="CHEBI:30616"/>
    </ligand>
</feature>
<feature type="binding site" evidence="1">
    <location>
        <position position="81"/>
    </location>
    <ligand>
        <name>Mg(2+)</name>
        <dbReference type="ChEBI" id="CHEBI:18420"/>
    </ligand>
</feature>
<feature type="binding site" evidence="1">
    <location>
        <position position="155"/>
    </location>
    <ligand>
        <name>Mg(2+)</name>
        <dbReference type="ChEBI" id="CHEBI:18420"/>
    </ligand>
</feature>
<feature type="binding site" evidence="1">
    <location>
        <begin position="162"/>
        <end position="164"/>
    </location>
    <ligand>
        <name>CTP</name>
        <dbReference type="ChEBI" id="CHEBI:37563"/>
        <note>allosteric inhibitor</note>
    </ligand>
</feature>
<feature type="binding site" evidence="1">
    <location>
        <begin position="202"/>
        <end position="207"/>
    </location>
    <ligand>
        <name>CTP</name>
        <dbReference type="ChEBI" id="CHEBI:37563"/>
        <note>allosteric inhibitor</note>
    </ligand>
</feature>
<feature type="binding site" evidence="1">
    <location>
        <begin position="202"/>
        <end position="207"/>
    </location>
    <ligand>
        <name>UTP</name>
        <dbReference type="ChEBI" id="CHEBI:46398"/>
    </ligand>
</feature>
<feature type="binding site" evidence="1">
    <location>
        <position position="238"/>
    </location>
    <ligand>
        <name>CTP</name>
        <dbReference type="ChEBI" id="CHEBI:37563"/>
        <note>allosteric inhibitor</note>
    </ligand>
</feature>
<feature type="binding site" evidence="1">
    <location>
        <position position="238"/>
    </location>
    <ligand>
        <name>UTP</name>
        <dbReference type="ChEBI" id="CHEBI:46398"/>
    </ligand>
</feature>
<feature type="binding site" evidence="1">
    <location>
        <position position="369"/>
    </location>
    <ligand>
        <name>L-glutamine</name>
        <dbReference type="ChEBI" id="CHEBI:58359"/>
    </ligand>
</feature>
<feature type="binding site" evidence="1">
    <location>
        <begin position="397"/>
        <end position="400"/>
    </location>
    <ligand>
        <name>L-glutamine</name>
        <dbReference type="ChEBI" id="CHEBI:58359"/>
    </ligand>
</feature>
<feature type="binding site" evidence="1">
    <location>
        <position position="419"/>
    </location>
    <ligand>
        <name>L-glutamine</name>
        <dbReference type="ChEBI" id="CHEBI:58359"/>
    </ligand>
</feature>
<feature type="binding site" evidence="1">
    <location>
        <position position="480"/>
    </location>
    <ligand>
        <name>L-glutamine</name>
        <dbReference type="ChEBI" id="CHEBI:58359"/>
    </ligand>
</feature>
<accession>Q5YY90</accession>
<protein>
    <recommendedName>
        <fullName evidence="1">CTP synthase</fullName>
        <ecNumber evidence="1">6.3.4.2</ecNumber>
    </recommendedName>
    <alternativeName>
        <fullName evidence="1">Cytidine 5'-triphosphate synthase</fullName>
    </alternativeName>
    <alternativeName>
        <fullName evidence="1">Cytidine triphosphate synthetase</fullName>
        <shortName evidence="1">CTP synthetase</shortName>
        <shortName evidence="1">CTPS</shortName>
    </alternativeName>
    <alternativeName>
        <fullName evidence="1">UTP--ammonia ligase</fullName>
    </alternativeName>
</protein>
<reference key="1">
    <citation type="journal article" date="2004" name="Proc. Natl. Acad. Sci. U.S.A.">
        <title>The complete genomic sequence of Nocardia farcinica IFM 10152.</title>
        <authorList>
            <person name="Ishikawa J."/>
            <person name="Yamashita A."/>
            <person name="Mikami Y."/>
            <person name="Hoshino Y."/>
            <person name="Kurita H."/>
            <person name="Hotta K."/>
            <person name="Shiba T."/>
            <person name="Hattori M."/>
        </authorList>
    </citation>
    <scope>NUCLEOTIDE SEQUENCE [LARGE SCALE GENOMIC DNA]</scope>
    <source>
        <strain>IFM 10152</strain>
    </source>
</reference>
<organism>
    <name type="scientific">Nocardia farcinica (strain IFM 10152)</name>
    <dbReference type="NCBI Taxonomy" id="247156"/>
    <lineage>
        <taxon>Bacteria</taxon>
        <taxon>Bacillati</taxon>
        <taxon>Actinomycetota</taxon>
        <taxon>Actinomycetes</taxon>
        <taxon>Mycobacteriales</taxon>
        <taxon>Nocardiaceae</taxon>
        <taxon>Nocardia</taxon>
    </lineage>
</organism>
<dbReference type="EC" id="6.3.4.2" evidence="1"/>
<dbReference type="EMBL" id="AP006618">
    <property type="protein sequence ID" value="BAD56851.1"/>
    <property type="molecule type" value="Genomic_DNA"/>
</dbReference>
<dbReference type="RefSeq" id="WP_011208536.1">
    <property type="nucleotide sequence ID" value="NC_006361.1"/>
</dbReference>
<dbReference type="SMR" id="Q5YY90"/>
<dbReference type="STRING" id="247156.NFA_20050"/>
<dbReference type="GeneID" id="61132785"/>
<dbReference type="KEGG" id="nfa:NFA_20050"/>
<dbReference type="eggNOG" id="COG0504">
    <property type="taxonomic scope" value="Bacteria"/>
</dbReference>
<dbReference type="HOGENOM" id="CLU_011675_5_0_11"/>
<dbReference type="OrthoDB" id="9801107at2"/>
<dbReference type="UniPathway" id="UPA00159">
    <property type="reaction ID" value="UER00277"/>
</dbReference>
<dbReference type="Proteomes" id="UP000006820">
    <property type="component" value="Chromosome"/>
</dbReference>
<dbReference type="GO" id="GO:0005829">
    <property type="term" value="C:cytosol"/>
    <property type="evidence" value="ECO:0007669"/>
    <property type="project" value="TreeGrafter"/>
</dbReference>
<dbReference type="GO" id="GO:0005524">
    <property type="term" value="F:ATP binding"/>
    <property type="evidence" value="ECO:0007669"/>
    <property type="project" value="UniProtKB-KW"/>
</dbReference>
<dbReference type="GO" id="GO:0003883">
    <property type="term" value="F:CTP synthase activity"/>
    <property type="evidence" value="ECO:0007669"/>
    <property type="project" value="UniProtKB-UniRule"/>
</dbReference>
<dbReference type="GO" id="GO:0004359">
    <property type="term" value="F:glutaminase activity"/>
    <property type="evidence" value="ECO:0007669"/>
    <property type="project" value="RHEA"/>
</dbReference>
<dbReference type="GO" id="GO:0042802">
    <property type="term" value="F:identical protein binding"/>
    <property type="evidence" value="ECO:0007669"/>
    <property type="project" value="TreeGrafter"/>
</dbReference>
<dbReference type="GO" id="GO:0046872">
    <property type="term" value="F:metal ion binding"/>
    <property type="evidence" value="ECO:0007669"/>
    <property type="project" value="UniProtKB-KW"/>
</dbReference>
<dbReference type="GO" id="GO:0044210">
    <property type="term" value="P:'de novo' CTP biosynthetic process"/>
    <property type="evidence" value="ECO:0007669"/>
    <property type="project" value="UniProtKB-UniRule"/>
</dbReference>
<dbReference type="GO" id="GO:0019856">
    <property type="term" value="P:pyrimidine nucleobase biosynthetic process"/>
    <property type="evidence" value="ECO:0007669"/>
    <property type="project" value="TreeGrafter"/>
</dbReference>
<dbReference type="CDD" id="cd03113">
    <property type="entry name" value="CTPS_N"/>
    <property type="match status" value="1"/>
</dbReference>
<dbReference type="CDD" id="cd01746">
    <property type="entry name" value="GATase1_CTP_Synthase"/>
    <property type="match status" value="1"/>
</dbReference>
<dbReference type="FunFam" id="3.40.50.300:FF:000009">
    <property type="entry name" value="CTP synthase"/>
    <property type="match status" value="1"/>
</dbReference>
<dbReference type="FunFam" id="3.40.50.880:FF:000002">
    <property type="entry name" value="CTP synthase"/>
    <property type="match status" value="1"/>
</dbReference>
<dbReference type="Gene3D" id="3.40.50.880">
    <property type="match status" value="1"/>
</dbReference>
<dbReference type="Gene3D" id="3.40.50.300">
    <property type="entry name" value="P-loop containing nucleotide triphosphate hydrolases"/>
    <property type="match status" value="1"/>
</dbReference>
<dbReference type="HAMAP" id="MF_01227">
    <property type="entry name" value="PyrG"/>
    <property type="match status" value="1"/>
</dbReference>
<dbReference type="InterPro" id="IPR029062">
    <property type="entry name" value="Class_I_gatase-like"/>
</dbReference>
<dbReference type="InterPro" id="IPR004468">
    <property type="entry name" value="CTP_synthase"/>
</dbReference>
<dbReference type="InterPro" id="IPR017456">
    <property type="entry name" value="CTP_synthase_N"/>
</dbReference>
<dbReference type="InterPro" id="IPR017926">
    <property type="entry name" value="GATASE"/>
</dbReference>
<dbReference type="InterPro" id="IPR033828">
    <property type="entry name" value="GATase1_CTP_Synthase"/>
</dbReference>
<dbReference type="InterPro" id="IPR027417">
    <property type="entry name" value="P-loop_NTPase"/>
</dbReference>
<dbReference type="NCBIfam" id="NF003792">
    <property type="entry name" value="PRK05380.1"/>
    <property type="match status" value="1"/>
</dbReference>
<dbReference type="NCBIfam" id="TIGR00337">
    <property type="entry name" value="PyrG"/>
    <property type="match status" value="1"/>
</dbReference>
<dbReference type="PANTHER" id="PTHR11550">
    <property type="entry name" value="CTP SYNTHASE"/>
    <property type="match status" value="1"/>
</dbReference>
<dbReference type="PANTHER" id="PTHR11550:SF0">
    <property type="entry name" value="CTP SYNTHASE-RELATED"/>
    <property type="match status" value="1"/>
</dbReference>
<dbReference type="Pfam" id="PF06418">
    <property type="entry name" value="CTP_synth_N"/>
    <property type="match status" value="1"/>
</dbReference>
<dbReference type="Pfam" id="PF00117">
    <property type="entry name" value="GATase"/>
    <property type="match status" value="1"/>
</dbReference>
<dbReference type="SUPFAM" id="SSF52317">
    <property type="entry name" value="Class I glutamine amidotransferase-like"/>
    <property type="match status" value="1"/>
</dbReference>
<dbReference type="SUPFAM" id="SSF52540">
    <property type="entry name" value="P-loop containing nucleoside triphosphate hydrolases"/>
    <property type="match status" value="1"/>
</dbReference>
<dbReference type="PROSITE" id="PS51273">
    <property type="entry name" value="GATASE_TYPE_1"/>
    <property type="match status" value="1"/>
</dbReference>
<evidence type="ECO:0000255" key="1">
    <source>
        <dbReference type="HAMAP-Rule" id="MF_01227"/>
    </source>
</evidence>
<keyword id="KW-0067">ATP-binding</keyword>
<keyword id="KW-0315">Glutamine amidotransferase</keyword>
<keyword id="KW-0436">Ligase</keyword>
<keyword id="KW-0460">Magnesium</keyword>
<keyword id="KW-0479">Metal-binding</keyword>
<keyword id="KW-0547">Nucleotide-binding</keyword>
<keyword id="KW-0665">Pyrimidine biosynthesis</keyword>
<keyword id="KW-1185">Reference proteome</keyword>
<proteinExistence type="inferred from homology"/>
<comment type="function">
    <text evidence="1">Catalyzes the ATP-dependent amination of UTP to CTP with either L-glutamine or ammonia as the source of nitrogen. Regulates intracellular CTP levels through interactions with the four ribonucleotide triphosphates.</text>
</comment>
<comment type="catalytic activity">
    <reaction evidence="1">
        <text>UTP + L-glutamine + ATP + H2O = CTP + L-glutamate + ADP + phosphate + 2 H(+)</text>
        <dbReference type="Rhea" id="RHEA:26426"/>
        <dbReference type="ChEBI" id="CHEBI:15377"/>
        <dbReference type="ChEBI" id="CHEBI:15378"/>
        <dbReference type="ChEBI" id="CHEBI:29985"/>
        <dbReference type="ChEBI" id="CHEBI:30616"/>
        <dbReference type="ChEBI" id="CHEBI:37563"/>
        <dbReference type="ChEBI" id="CHEBI:43474"/>
        <dbReference type="ChEBI" id="CHEBI:46398"/>
        <dbReference type="ChEBI" id="CHEBI:58359"/>
        <dbReference type="ChEBI" id="CHEBI:456216"/>
        <dbReference type="EC" id="6.3.4.2"/>
    </reaction>
</comment>
<comment type="catalytic activity">
    <reaction evidence="1">
        <text>L-glutamine + H2O = L-glutamate + NH4(+)</text>
        <dbReference type="Rhea" id="RHEA:15889"/>
        <dbReference type="ChEBI" id="CHEBI:15377"/>
        <dbReference type="ChEBI" id="CHEBI:28938"/>
        <dbReference type="ChEBI" id="CHEBI:29985"/>
        <dbReference type="ChEBI" id="CHEBI:58359"/>
    </reaction>
</comment>
<comment type="catalytic activity">
    <reaction evidence="1">
        <text>UTP + NH4(+) + ATP = CTP + ADP + phosphate + 2 H(+)</text>
        <dbReference type="Rhea" id="RHEA:16597"/>
        <dbReference type="ChEBI" id="CHEBI:15378"/>
        <dbReference type="ChEBI" id="CHEBI:28938"/>
        <dbReference type="ChEBI" id="CHEBI:30616"/>
        <dbReference type="ChEBI" id="CHEBI:37563"/>
        <dbReference type="ChEBI" id="CHEBI:43474"/>
        <dbReference type="ChEBI" id="CHEBI:46398"/>
        <dbReference type="ChEBI" id="CHEBI:456216"/>
    </reaction>
</comment>
<comment type="activity regulation">
    <text evidence="1">Allosterically activated by GTP, when glutamine is the substrate; GTP has no effect on the reaction when ammonia is the substrate. The allosteric effector GTP functions by stabilizing the protein conformation that binds the tetrahedral intermediate(s) formed during glutamine hydrolysis. Inhibited by the product CTP, via allosteric rather than competitive inhibition.</text>
</comment>
<comment type="pathway">
    <text evidence="1">Pyrimidine metabolism; CTP biosynthesis via de novo pathway; CTP from UDP: step 2/2.</text>
</comment>
<comment type="subunit">
    <text evidence="1">Homotetramer.</text>
</comment>
<comment type="miscellaneous">
    <text evidence="1">CTPSs have evolved a hybrid strategy for distinguishing between UTP and CTP. The overlapping regions of the product feedback inhibitory and substrate sites recognize a common feature in both compounds, the triphosphate moiety. To differentiate isosteric substrate and product pyrimidine rings, an additional pocket far from the expected kinase/ligase catalytic site, specifically recognizes the cytosine and ribose portions of the product inhibitor.</text>
</comment>
<comment type="similarity">
    <text evidence="1">Belongs to the CTP synthase family.</text>
</comment>